<organism>
    <name type="scientific">Shigella sonnei (strain Ss046)</name>
    <dbReference type="NCBI Taxonomy" id="300269"/>
    <lineage>
        <taxon>Bacteria</taxon>
        <taxon>Pseudomonadati</taxon>
        <taxon>Pseudomonadota</taxon>
        <taxon>Gammaproteobacteria</taxon>
        <taxon>Enterobacterales</taxon>
        <taxon>Enterobacteriaceae</taxon>
        <taxon>Shigella</taxon>
    </lineage>
</organism>
<feature type="chain" id="PRO_0000351709" description="L-rhamnonate dehydratase">
    <location>
        <begin position="1"/>
        <end position="428"/>
    </location>
</feature>
<feature type="active site" description="Proton acceptor" evidence="1">
    <location>
        <position position="352"/>
    </location>
</feature>
<feature type="binding site" evidence="1">
    <location>
        <position position="56"/>
    </location>
    <ligand>
        <name>substrate</name>
    </ligand>
</feature>
<feature type="binding site" evidence="1">
    <location>
        <position position="82"/>
    </location>
    <ligand>
        <name>substrate</name>
    </ligand>
</feature>
<feature type="binding site" evidence="1">
    <location>
        <position position="249"/>
    </location>
    <ligand>
        <name>Mg(2+)</name>
        <dbReference type="ChEBI" id="CHEBI:18420"/>
    </ligand>
</feature>
<feature type="binding site" evidence="1">
    <location>
        <position position="275"/>
    </location>
    <ligand>
        <name>Mg(2+)</name>
        <dbReference type="ChEBI" id="CHEBI:18420"/>
    </ligand>
</feature>
<feature type="binding site" evidence="1">
    <location>
        <position position="303"/>
    </location>
    <ligand>
        <name>Mg(2+)</name>
        <dbReference type="ChEBI" id="CHEBI:18420"/>
    </ligand>
</feature>
<feature type="binding site" evidence="1">
    <location>
        <position position="372"/>
    </location>
    <ligand>
        <name>substrate</name>
    </ligand>
</feature>
<feature type="site" description="Increases basicity of active site His" evidence="1">
    <location>
        <position position="325"/>
    </location>
</feature>
<feature type="site" description="Transition state stabilizer" evidence="1">
    <location>
        <position position="372"/>
    </location>
</feature>
<accession>Q3YZV9</accession>
<evidence type="ECO:0000255" key="1">
    <source>
        <dbReference type="HAMAP-Rule" id="MF_01288"/>
    </source>
</evidence>
<reference key="1">
    <citation type="journal article" date="2005" name="Nucleic Acids Res.">
        <title>Genome dynamics and diversity of Shigella species, the etiologic agents of bacillary dysentery.</title>
        <authorList>
            <person name="Yang F."/>
            <person name="Yang J."/>
            <person name="Zhang X."/>
            <person name="Chen L."/>
            <person name="Jiang Y."/>
            <person name="Yan Y."/>
            <person name="Tang X."/>
            <person name="Wang J."/>
            <person name="Xiong Z."/>
            <person name="Dong J."/>
            <person name="Xue Y."/>
            <person name="Zhu Y."/>
            <person name="Xu X."/>
            <person name="Sun L."/>
            <person name="Chen S."/>
            <person name="Nie H."/>
            <person name="Peng J."/>
            <person name="Xu J."/>
            <person name="Wang Y."/>
            <person name="Yuan Z."/>
            <person name="Wen Y."/>
            <person name="Yao Z."/>
            <person name="Shen Y."/>
            <person name="Qiang B."/>
            <person name="Hou Y."/>
            <person name="Yu J."/>
            <person name="Jin Q."/>
        </authorList>
    </citation>
    <scope>NUCLEOTIDE SEQUENCE [LARGE SCALE GENOMIC DNA]</scope>
    <source>
        <strain>Ss046</strain>
    </source>
</reference>
<keyword id="KW-0456">Lyase</keyword>
<keyword id="KW-0460">Magnesium</keyword>
<keyword id="KW-0479">Metal-binding</keyword>
<keyword id="KW-1185">Reference proteome</keyword>
<comment type="function">
    <text evidence="1">Catalyzes the dehydration of L-rhamnonate to 2-keto-3-deoxy-L-rhamnonate (KDR).</text>
</comment>
<comment type="catalytic activity">
    <reaction evidence="1">
        <text>L-rhamnonate = 2-dehydro-3-deoxy-L-rhamnonate + H2O</text>
        <dbReference type="Rhea" id="RHEA:23080"/>
        <dbReference type="ChEBI" id="CHEBI:15377"/>
        <dbReference type="ChEBI" id="CHEBI:58118"/>
        <dbReference type="ChEBI" id="CHEBI:58371"/>
        <dbReference type="EC" id="4.2.1.90"/>
    </reaction>
</comment>
<comment type="cofactor">
    <cofactor evidence="1">
        <name>Mg(2+)</name>
        <dbReference type="ChEBI" id="CHEBI:18420"/>
    </cofactor>
    <text evidence="1">Binds 1 Mg(2+) ion per subunit.</text>
</comment>
<comment type="subunit">
    <text evidence="1">Homooctamer; tetramer of dimers.</text>
</comment>
<comment type="miscellaneous">
    <text evidence="1">Reaction proceeds via a syn dehydration.</text>
</comment>
<comment type="similarity">
    <text evidence="1">Belongs to the mandelate racemase/muconate lactonizing enzyme family. RhamD subfamily.</text>
</comment>
<protein>
    <recommendedName>
        <fullName evidence="1">L-rhamnonate dehydratase</fullName>
        <shortName evidence="1">RhamD</shortName>
        <ecNumber evidence="1">4.2.1.90</ecNumber>
    </recommendedName>
</protein>
<sequence length="428" mass="47895">MPAPGIFHVCWDGKVPLTYRPHNNGEHHDPTKNQTGSRLVYWRCDSRKRCWRGDYHDQGANHWIDDHIATPMSKYRDYEQSRQSFGINVLGTLIVEVEAENGQTGFAVSTAGEMGCFIVEKHLNRFIEGKCVSDIKLIHDQMLNATLYYSGSGGLVMNTISCVDLALWDLFGKVVGLPVYKLLGGAVRDEIQFYATGARPDLAKEMGFIGGKMPTHWGPHDGDAGIRKDAVMVADMREKCGEDFWLMLDCWMSQDVNYATKLAHACAPYNLKWIEECLPPQQYEGYRELKRNAPVGMMVTSGEHHGTLQSFRTLSETGIDIMQPDVGWCGGLTTLVEIAAIAKSRGQLVVPHGSSVYSHHAVITFTNTPFSEFLMTSPDCSTMRPQFDPILLNEPVPVNGRIHKSVLDKPGFGVELNRDCNLKRPYSH</sequence>
<proteinExistence type="inferred from homology"/>
<gene>
    <name evidence="1" type="primary">rhmD</name>
    <name type="ordered locus">SSON_2308</name>
</gene>
<name>RHMD_SHISS</name>
<dbReference type="EC" id="4.2.1.90" evidence="1"/>
<dbReference type="EMBL" id="CP000038">
    <property type="protein sequence ID" value="AAZ88953.1"/>
    <property type="molecule type" value="Genomic_DNA"/>
</dbReference>
<dbReference type="SMR" id="Q3YZV9"/>
<dbReference type="KEGG" id="ssn:SSON_2308"/>
<dbReference type="HOGENOM" id="CLU_030273_1_0_6"/>
<dbReference type="Proteomes" id="UP000002529">
    <property type="component" value="Chromosome"/>
</dbReference>
<dbReference type="GO" id="GO:0050032">
    <property type="term" value="F:L-rhamnonate dehydratase activity"/>
    <property type="evidence" value="ECO:0007669"/>
    <property type="project" value="UniProtKB-UniRule"/>
</dbReference>
<dbReference type="GO" id="GO:0000287">
    <property type="term" value="F:magnesium ion binding"/>
    <property type="evidence" value="ECO:0007669"/>
    <property type="project" value="UniProtKB-UniRule"/>
</dbReference>
<dbReference type="GO" id="GO:0009063">
    <property type="term" value="P:amino acid catabolic process"/>
    <property type="evidence" value="ECO:0007669"/>
    <property type="project" value="InterPro"/>
</dbReference>
<dbReference type="GO" id="GO:0016052">
    <property type="term" value="P:carbohydrate catabolic process"/>
    <property type="evidence" value="ECO:0007669"/>
    <property type="project" value="TreeGrafter"/>
</dbReference>
<dbReference type="CDD" id="cd03327">
    <property type="entry name" value="MR_like_2"/>
    <property type="match status" value="1"/>
</dbReference>
<dbReference type="FunFam" id="3.20.20.120:FF:000005">
    <property type="entry name" value="Putative L-rhamnonate dehydratase"/>
    <property type="match status" value="1"/>
</dbReference>
<dbReference type="Gene3D" id="3.20.20.120">
    <property type="entry name" value="Enolase-like C-terminal domain"/>
    <property type="match status" value="1"/>
</dbReference>
<dbReference type="Gene3D" id="3.30.390.10">
    <property type="entry name" value="Enolase-like, N-terminal domain"/>
    <property type="match status" value="1"/>
</dbReference>
<dbReference type="HAMAP" id="MF_01288">
    <property type="entry name" value="Rhamnon_dehydrat"/>
    <property type="match status" value="1"/>
</dbReference>
<dbReference type="InterPro" id="IPR036849">
    <property type="entry name" value="Enolase-like_C_sf"/>
</dbReference>
<dbReference type="InterPro" id="IPR029017">
    <property type="entry name" value="Enolase-like_N"/>
</dbReference>
<dbReference type="InterPro" id="IPR029065">
    <property type="entry name" value="Enolase_C-like"/>
</dbReference>
<dbReference type="InterPro" id="IPR023444">
    <property type="entry name" value="L-Rhamnon_dehydrat"/>
</dbReference>
<dbReference type="InterPro" id="IPR018110">
    <property type="entry name" value="Mandel_Rmase/mucon_lact_enz_CS"/>
</dbReference>
<dbReference type="InterPro" id="IPR013342">
    <property type="entry name" value="Mandelate_racemase_C"/>
</dbReference>
<dbReference type="InterPro" id="IPR013341">
    <property type="entry name" value="Mandelate_racemase_N_dom"/>
</dbReference>
<dbReference type="InterPro" id="IPR046945">
    <property type="entry name" value="RHMD-like"/>
</dbReference>
<dbReference type="NCBIfam" id="NF011968">
    <property type="entry name" value="PRK15440.1"/>
    <property type="match status" value="1"/>
</dbReference>
<dbReference type="PANTHER" id="PTHR13794">
    <property type="entry name" value="ENOLASE SUPERFAMILY, MANDELATE RACEMASE"/>
    <property type="match status" value="1"/>
</dbReference>
<dbReference type="PANTHER" id="PTHR13794:SF58">
    <property type="entry name" value="MITOCHONDRIAL ENOLASE SUPERFAMILY MEMBER 1"/>
    <property type="match status" value="1"/>
</dbReference>
<dbReference type="Pfam" id="PF13378">
    <property type="entry name" value="MR_MLE_C"/>
    <property type="match status" value="1"/>
</dbReference>
<dbReference type="Pfam" id="PF02746">
    <property type="entry name" value="MR_MLE_N"/>
    <property type="match status" value="1"/>
</dbReference>
<dbReference type="SFLD" id="SFLDS00001">
    <property type="entry name" value="Enolase"/>
    <property type="match status" value="1"/>
</dbReference>
<dbReference type="SFLD" id="SFLDF00006">
    <property type="entry name" value="rhamnonate_dehydratase"/>
    <property type="match status" value="1"/>
</dbReference>
<dbReference type="SMART" id="SM00922">
    <property type="entry name" value="MR_MLE"/>
    <property type="match status" value="1"/>
</dbReference>
<dbReference type="SUPFAM" id="SSF51604">
    <property type="entry name" value="Enolase C-terminal domain-like"/>
    <property type="match status" value="1"/>
</dbReference>
<dbReference type="SUPFAM" id="SSF54826">
    <property type="entry name" value="Enolase N-terminal domain-like"/>
    <property type="match status" value="1"/>
</dbReference>
<dbReference type="PROSITE" id="PS00908">
    <property type="entry name" value="MR_MLE_1"/>
    <property type="match status" value="1"/>
</dbReference>